<proteinExistence type="inferred from homology"/>
<reference key="1">
    <citation type="journal article" date="2001" name="Plant Cell">
        <title>Functional genomic analysis of the HY2 family of ferredoxin-dependent bilin reductases from oxygenic photosynthetic organisms.</title>
        <authorList>
            <person name="Frankenberg N."/>
            <person name="Mukougawa K."/>
            <person name="Kohchi T."/>
            <person name="Lagarias J.C."/>
        </authorList>
    </citation>
    <scope>NUCLEOTIDE SEQUENCE [GENOMIC DNA]</scope>
</reference>
<reference key="2">
    <citation type="journal article" date="2013" name="Plant Physiol.">
        <title>A Nostoc punctiforme Sugar Transporter Necessary to Establish a Cyanobacterium-Plant Symbiosis.</title>
        <authorList>
            <person name="Ekman M."/>
            <person name="Picossi S."/>
            <person name="Campbell E.L."/>
            <person name="Meeks J.C."/>
            <person name="Flores E."/>
        </authorList>
    </citation>
    <scope>NUCLEOTIDE SEQUENCE [LARGE SCALE GENOMIC DNA]</scope>
    <source>
        <strain>ATCC 29133 / PCC 73102</strain>
    </source>
</reference>
<accession>Q93TM8</accession>
<accession>B2J9I2</accession>
<sequence length="255" mass="29293">MNSERSDVTLYQPFLDYAIAYMRSRLDLEPYPIPTGFESNSAVVGKGKNQEEVVTTSYAFQTAKLRQIRAAHVQGGNSLQVLNFVIFPHLNYDLPFFGADLVTLPGGHLIALDMQPLFRDDSAYQAKYTEPILPIFHAHQQHLSWGGDFPEEAQPFFSPAFLWTRPQETAVVETQVFAAFKDYLKAYLDFVEQAEAVTDSQNLVAIKQAQLRYLRYRAEKDPARGMFKRFYGAEWTEEYIHGFLFDLERKLTVVK</sequence>
<comment type="function">
    <text>Catalyzes the two-electron reduction of the C2 and C3(1) diene system of 15,16-dihydrobiliverdin.</text>
</comment>
<comment type="catalytic activity">
    <reaction>
        <text>(3Z)-phycoerythrobilin + oxidized 2[4Fe-4S]-[ferredoxin] = 15,16-dihydrobiliverdin + reduced 2[4Fe-4S]-[ferredoxin] + 2 H(+)</text>
        <dbReference type="Rhea" id="RHEA:22092"/>
        <dbReference type="Rhea" id="RHEA-COMP:10002"/>
        <dbReference type="Rhea" id="RHEA-COMP:10004"/>
        <dbReference type="ChEBI" id="CHEBI:15378"/>
        <dbReference type="ChEBI" id="CHEBI:33722"/>
        <dbReference type="ChEBI" id="CHEBI:33723"/>
        <dbReference type="ChEBI" id="CHEBI:57438"/>
        <dbReference type="ChEBI" id="CHEBI:57899"/>
        <dbReference type="EC" id="1.3.7.3"/>
    </reaction>
</comment>
<comment type="similarity">
    <text evidence="1">Belongs to the HY2 family.</text>
</comment>
<dbReference type="EC" id="1.3.7.3"/>
<dbReference type="EMBL" id="AF339058">
    <property type="protein sequence ID" value="AAK38589.1"/>
    <property type="molecule type" value="Genomic_DNA"/>
</dbReference>
<dbReference type="EMBL" id="CP001037">
    <property type="protein sequence ID" value="ACC79481.1"/>
    <property type="molecule type" value="Genomic_DNA"/>
</dbReference>
<dbReference type="RefSeq" id="WP_012407506.1">
    <property type="nucleotide sequence ID" value="NC_010628.1"/>
</dbReference>
<dbReference type="SMR" id="Q93TM8"/>
<dbReference type="STRING" id="63737.Npun_R0729"/>
<dbReference type="EnsemblBacteria" id="ACC79481">
    <property type="protein sequence ID" value="ACC79481"/>
    <property type="gene ID" value="Npun_R0729"/>
</dbReference>
<dbReference type="KEGG" id="npu:Npun_R0729"/>
<dbReference type="eggNOG" id="ENOG502Z8GK">
    <property type="taxonomic scope" value="Bacteria"/>
</dbReference>
<dbReference type="HOGENOM" id="CLU_086208_1_0_3"/>
<dbReference type="PhylomeDB" id="Q93TM8"/>
<dbReference type="BRENDA" id="1.3.7.3">
    <property type="organism ID" value="4370"/>
</dbReference>
<dbReference type="Proteomes" id="UP000001191">
    <property type="component" value="Chromosome"/>
</dbReference>
<dbReference type="GO" id="GO:0050897">
    <property type="term" value="F:cobalt ion binding"/>
    <property type="evidence" value="ECO:0007669"/>
    <property type="project" value="InterPro"/>
</dbReference>
<dbReference type="GO" id="GO:0050618">
    <property type="term" value="F:phycoerythrobilin:ferredoxin oxidoreductase activity"/>
    <property type="evidence" value="ECO:0007669"/>
    <property type="project" value="UniProtKB-UniRule"/>
</dbReference>
<dbReference type="GO" id="GO:0010024">
    <property type="term" value="P:phytochromobilin biosynthetic process"/>
    <property type="evidence" value="ECO:0007669"/>
    <property type="project" value="InterPro"/>
</dbReference>
<dbReference type="Gene3D" id="3.40.1500.20">
    <property type="match status" value="1"/>
</dbReference>
<dbReference type="HAMAP" id="MF_00793">
    <property type="entry name" value="PebB"/>
    <property type="match status" value="1"/>
</dbReference>
<dbReference type="InterPro" id="IPR009249">
    <property type="entry name" value="Ferredoxin-dep_bilin_Rdtase"/>
</dbReference>
<dbReference type="InterPro" id="IPR022827">
    <property type="entry name" value="Phycoerythrobilin_Fdx_Rdtase"/>
</dbReference>
<dbReference type="NCBIfam" id="NF009723">
    <property type="entry name" value="PRK13250.1"/>
    <property type="match status" value="1"/>
</dbReference>
<dbReference type="PANTHER" id="PTHR34557">
    <property type="entry name" value="PHYTOCHROMOBILIN:FERREDOXIN OXIDOREDUCTASE, CHLOROPLASTIC"/>
    <property type="match status" value="1"/>
</dbReference>
<dbReference type="PANTHER" id="PTHR34557:SF1">
    <property type="entry name" value="PHYTOCHROMOBILIN:FERREDOXIN OXIDOREDUCTASE, CHLOROPLASTIC"/>
    <property type="match status" value="1"/>
</dbReference>
<dbReference type="Pfam" id="PF05996">
    <property type="entry name" value="Fe_bilin_red"/>
    <property type="match status" value="1"/>
</dbReference>
<gene>
    <name type="primary">pebB</name>
    <name type="ordered locus">Npun_R0729</name>
</gene>
<feature type="chain" id="PRO_0000216732" description="Phycoerythrobilin:ferredoxin oxidoreductase">
    <location>
        <begin position="1"/>
        <end position="255"/>
    </location>
</feature>
<keyword id="KW-0560">Oxidoreductase</keyword>
<keyword id="KW-1185">Reference proteome</keyword>
<protein>
    <recommendedName>
        <fullName>Phycoerythrobilin:ferredoxin oxidoreductase</fullName>
        <ecNumber>1.3.7.3</ecNumber>
    </recommendedName>
</protein>
<evidence type="ECO:0000305" key="1"/>
<organism>
    <name type="scientific">Nostoc punctiforme (strain ATCC 29133 / PCC 73102)</name>
    <dbReference type="NCBI Taxonomy" id="63737"/>
    <lineage>
        <taxon>Bacteria</taxon>
        <taxon>Bacillati</taxon>
        <taxon>Cyanobacteriota</taxon>
        <taxon>Cyanophyceae</taxon>
        <taxon>Nostocales</taxon>
        <taxon>Nostocaceae</taxon>
        <taxon>Nostoc</taxon>
    </lineage>
</organism>
<name>PEBB_NOSP7</name>